<reference key="1">
    <citation type="journal article" date="2004" name="Nucleic Acids Res.">
        <title>Unique features revealed by the genome sequence of Acinetobacter sp. ADP1, a versatile and naturally transformation competent bacterium.</title>
        <authorList>
            <person name="Barbe V."/>
            <person name="Vallenet D."/>
            <person name="Fonknechten N."/>
            <person name="Kreimeyer A."/>
            <person name="Oztas S."/>
            <person name="Labarre L."/>
            <person name="Cruveiller S."/>
            <person name="Robert C."/>
            <person name="Duprat S."/>
            <person name="Wincker P."/>
            <person name="Ornston L.N."/>
            <person name="Weissenbach J."/>
            <person name="Marliere P."/>
            <person name="Cohen G.N."/>
            <person name="Medigue C."/>
        </authorList>
    </citation>
    <scope>NUCLEOTIDE SEQUENCE [LARGE SCALE GENOMIC DNA]</scope>
    <source>
        <strain>ATCC 33305 / BD413 / ADP1</strain>
    </source>
</reference>
<sequence length="102" mass="10997">MIPGEVITPEGDIELNVDRPTLKVSVANTGDRPIQVGSHFHFAEANDALQFDRGLTKGYRLNIAAGTAVRFEPGQSRDVELVALSGKRQVYGFAGRVMGALD</sequence>
<protein>
    <recommendedName>
        <fullName evidence="1">Urease subunit beta</fullName>
        <ecNumber evidence="1">3.5.1.5</ecNumber>
    </recommendedName>
    <alternativeName>
        <fullName evidence="1">Urea amidohydrolase subunit beta</fullName>
    </alternativeName>
</protein>
<name>URE2_ACIAD</name>
<proteinExistence type="inferred from homology"/>
<organism>
    <name type="scientific">Acinetobacter baylyi (strain ATCC 33305 / BD413 / ADP1)</name>
    <dbReference type="NCBI Taxonomy" id="62977"/>
    <lineage>
        <taxon>Bacteria</taxon>
        <taxon>Pseudomonadati</taxon>
        <taxon>Pseudomonadota</taxon>
        <taxon>Gammaproteobacteria</taxon>
        <taxon>Moraxellales</taxon>
        <taxon>Moraxellaceae</taxon>
        <taxon>Acinetobacter</taxon>
    </lineage>
</organism>
<comment type="catalytic activity">
    <reaction evidence="1">
        <text>urea + 2 H2O + H(+) = hydrogencarbonate + 2 NH4(+)</text>
        <dbReference type="Rhea" id="RHEA:20557"/>
        <dbReference type="ChEBI" id="CHEBI:15377"/>
        <dbReference type="ChEBI" id="CHEBI:15378"/>
        <dbReference type="ChEBI" id="CHEBI:16199"/>
        <dbReference type="ChEBI" id="CHEBI:17544"/>
        <dbReference type="ChEBI" id="CHEBI:28938"/>
        <dbReference type="EC" id="3.5.1.5"/>
    </reaction>
</comment>
<comment type="pathway">
    <text evidence="1">Nitrogen metabolism; urea degradation; CO(2) and NH(3) from urea (urease route): step 1/1.</text>
</comment>
<comment type="subunit">
    <text evidence="1">Heterotrimer of UreA (gamma), UreB (beta) and UreC (alpha) subunits. Three heterotrimers associate to form the active enzyme.</text>
</comment>
<comment type="subcellular location">
    <subcellularLocation>
        <location evidence="1">Cytoplasm</location>
    </subcellularLocation>
</comment>
<comment type="similarity">
    <text evidence="1">Belongs to the urease beta subunit family.</text>
</comment>
<dbReference type="EC" id="3.5.1.5" evidence="1"/>
<dbReference type="EMBL" id="CR543861">
    <property type="protein sequence ID" value="CAG67975.1"/>
    <property type="molecule type" value="Genomic_DNA"/>
</dbReference>
<dbReference type="RefSeq" id="WP_004921566.1">
    <property type="nucleotide sequence ID" value="NC_005966.1"/>
</dbReference>
<dbReference type="SMR" id="Q6FD84"/>
<dbReference type="STRING" id="202950.GCA_001485005_01277"/>
<dbReference type="GeneID" id="45233526"/>
<dbReference type="KEGG" id="aci:ACIAD1090"/>
<dbReference type="eggNOG" id="COG0832">
    <property type="taxonomic scope" value="Bacteria"/>
</dbReference>
<dbReference type="HOGENOM" id="CLU_129707_1_1_6"/>
<dbReference type="OrthoDB" id="9797217at2"/>
<dbReference type="BioCyc" id="ASP62977:ACIAD_RS05010-MONOMER"/>
<dbReference type="UniPathway" id="UPA00258">
    <property type="reaction ID" value="UER00370"/>
</dbReference>
<dbReference type="Proteomes" id="UP000000430">
    <property type="component" value="Chromosome"/>
</dbReference>
<dbReference type="GO" id="GO:0035550">
    <property type="term" value="C:urease complex"/>
    <property type="evidence" value="ECO:0007669"/>
    <property type="project" value="InterPro"/>
</dbReference>
<dbReference type="GO" id="GO:0009039">
    <property type="term" value="F:urease activity"/>
    <property type="evidence" value="ECO:0007669"/>
    <property type="project" value="UniProtKB-UniRule"/>
</dbReference>
<dbReference type="GO" id="GO:0043419">
    <property type="term" value="P:urea catabolic process"/>
    <property type="evidence" value="ECO:0007669"/>
    <property type="project" value="UniProtKB-UniRule"/>
</dbReference>
<dbReference type="CDD" id="cd00407">
    <property type="entry name" value="Urease_beta"/>
    <property type="match status" value="1"/>
</dbReference>
<dbReference type="FunFam" id="2.10.150.10:FF:000001">
    <property type="entry name" value="Urease subunit beta"/>
    <property type="match status" value="1"/>
</dbReference>
<dbReference type="Gene3D" id="2.10.150.10">
    <property type="entry name" value="Urease, beta subunit"/>
    <property type="match status" value="1"/>
</dbReference>
<dbReference type="HAMAP" id="MF_01954">
    <property type="entry name" value="Urease_beta"/>
    <property type="match status" value="1"/>
</dbReference>
<dbReference type="InterPro" id="IPR002019">
    <property type="entry name" value="Urease_beta-like"/>
</dbReference>
<dbReference type="InterPro" id="IPR036461">
    <property type="entry name" value="Urease_betasu_sf"/>
</dbReference>
<dbReference type="InterPro" id="IPR050069">
    <property type="entry name" value="Urease_subunit"/>
</dbReference>
<dbReference type="NCBIfam" id="NF009682">
    <property type="entry name" value="PRK13203.1"/>
    <property type="match status" value="1"/>
</dbReference>
<dbReference type="NCBIfam" id="TIGR00192">
    <property type="entry name" value="urease_beta"/>
    <property type="match status" value="1"/>
</dbReference>
<dbReference type="PANTHER" id="PTHR33569">
    <property type="entry name" value="UREASE"/>
    <property type="match status" value="1"/>
</dbReference>
<dbReference type="PANTHER" id="PTHR33569:SF1">
    <property type="entry name" value="UREASE"/>
    <property type="match status" value="1"/>
</dbReference>
<dbReference type="Pfam" id="PF00699">
    <property type="entry name" value="Urease_beta"/>
    <property type="match status" value="1"/>
</dbReference>
<dbReference type="SUPFAM" id="SSF51278">
    <property type="entry name" value="Urease, beta-subunit"/>
    <property type="match status" value="1"/>
</dbReference>
<accession>Q6FD84</accession>
<gene>
    <name evidence="1" type="primary">ureB</name>
    <name type="ordered locus">ACIAD1090</name>
</gene>
<keyword id="KW-0963">Cytoplasm</keyword>
<keyword id="KW-0378">Hydrolase</keyword>
<feature type="chain" id="PRO_0000234222" description="Urease subunit beta">
    <location>
        <begin position="1"/>
        <end position="102"/>
    </location>
</feature>
<evidence type="ECO:0000255" key="1">
    <source>
        <dbReference type="HAMAP-Rule" id="MF_01954"/>
    </source>
</evidence>